<comment type="function">
    <text evidence="1">Nonessential SNARE involved in retrograde transport within the Golgi complex.</text>
</comment>
<comment type="subunit">
    <text evidence="1">Component of a SNARE complex consisting of sed5, gos1, ykt6, and sft1.</text>
</comment>
<comment type="subcellular location">
    <subcellularLocation>
        <location evidence="1">Golgi apparatus membrane</location>
        <topology evidence="1">Single-pass type IV membrane protein</topology>
    </subcellularLocation>
</comment>
<comment type="similarity">
    <text evidence="3">Belongs to the GOSR1 family.</text>
</comment>
<protein>
    <recommendedName>
        <fullName>Protein transport protein gos1</fullName>
    </recommendedName>
    <alternativeName>
        <fullName>Golgi SNAP receptor complex member 1</fullName>
    </alternativeName>
    <alternativeName>
        <fullName>Golgi SNARE protein 1</fullName>
    </alternativeName>
</protein>
<reference key="1">
    <citation type="journal article" date="2002" name="Nature">
        <title>The genome sequence of Schizosaccharomyces pombe.</title>
        <authorList>
            <person name="Wood V."/>
            <person name="Gwilliam R."/>
            <person name="Rajandream M.A."/>
            <person name="Lyne M.H."/>
            <person name="Lyne R."/>
            <person name="Stewart A."/>
            <person name="Sgouros J.G."/>
            <person name="Peat N."/>
            <person name="Hayles J."/>
            <person name="Baker S.G."/>
            <person name="Basham D."/>
            <person name="Bowman S."/>
            <person name="Brooks K."/>
            <person name="Brown D."/>
            <person name="Brown S."/>
            <person name="Chillingworth T."/>
            <person name="Churcher C.M."/>
            <person name="Collins M."/>
            <person name="Connor R."/>
            <person name="Cronin A."/>
            <person name="Davis P."/>
            <person name="Feltwell T."/>
            <person name="Fraser A."/>
            <person name="Gentles S."/>
            <person name="Goble A."/>
            <person name="Hamlin N."/>
            <person name="Harris D.E."/>
            <person name="Hidalgo J."/>
            <person name="Hodgson G."/>
            <person name="Holroyd S."/>
            <person name="Hornsby T."/>
            <person name="Howarth S."/>
            <person name="Huckle E.J."/>
            <person name="Hunt S."/>
            <person name="Jagels K."/>
            <person name="James K.D."/>
            <person name="Jones L."/>
            <person name="Jones M."/>
            <person name="Leather S."/>
            <person name="McDonald S."/>
            <person name="McLean J."/>
            <person name="Mooney P."/>
            <person name="Moule S."/>
            <person name="Mungall K.L."/>
            <person name="Murphy L.D."/>
            <person name="Niblett D."/>
            <person name="Odell C."/>
            <person name="Oliver K."/>
            <person name="O'Neil S."/>
            <person name="Pearson D."/>
            <person name="Quail M.A."/>
            <person name="Rabbinowitsch E."/>
            <person name="Rutherford K.M."/>
            <person name="Rutter S."/>
            <person name="Saunders D."/>
            <person name="Seeger K."/>
            <person name="Sharp S."/>
            <person name="Skelton J."/>
            <person name="Simmonds M.N."/>
            <person name="Squares R."/>
            <person name="Squares S."/>
            <person name="Stevens K."/>
            <person name="Taylor K."/>
            <person name="Taylor R.G."/>
            <person name="Tivey A."/>
            <person name="Walsh S.V."/>
            <person name="Warren T."/>
            <person name="Whitehead S."/>
            <person name="Woodward J.R."/>
            <person name="Volckaert G."/>
            <person name="Aert R."/>
            <person name="Robben J."/>
            <person name="Grymonprez B."/>
            <person name="Weltjens I."/>
            <person name="Vanstreels E."/>
            <person name="Rieger M."/>
            <person name="Schaefer M."/>
            <person name="Mueller-Auer S."/>
            <person name="Gabel C."/>
            <person name="Fuchs M."/>
            <person name="Duesterhoeft A."/>
            <person name="Fritzc C."/>
            <person name="Holzer E."/>
            <person name="Moestl D."/>
            <person name="Hilbert H."/>
            <person name="Borzym K."/>
            <person name="Langer I."/>
            <person name="Beck A."/>
            <person name="Lehrach H."/>
            <person name="Reinhardt R."/>
            <person name="Pohl T.M."/>
            <person name="Eger P."/>
            <person name="Zimmermann W."/>
            <person name="Wedler H."/>
            <person name="Wambutt R."/>
            <person name="Purnelle B."/>
            <person name="Goffeau A."/>
            <person name="Cadieu E."/>
            <person name="Dreano S."/>
            <person name="Gloux S."/>
            <person name="Lelaure V."/>
            <person name="Mottier S."/>
            <person name="Galibert F."/>
            <person name="Aves S.J."/>
            <person name="Xiang Z."/>
            <person name="Hunt C."/>
            <person name="Moore K."/>
            <person name="Hurst S.M."/>
            <person name="Lucas M."/>
            <person name="Rochet M."/>
            <person name="Gaillardin C."/>
            <person name="Tallada V.A."/>
            <person name="Garzon A."/>
            <person name="Thode G."/>
            <person name="Daga R.R."/>
            <person name="Cruzado L."/>
            <person name="Jimenez J."/>
            <person name="Sanchez M."/>
            <person name="del Rey F."/>
            <person name="Benito J."/>
            <person name="Dominguez A."/>
            <person name="Revuelta J.L."/>
            <person name="Moreno S."/>
            <person name="Armstrong J."/>
            <person name="Forsburg S.L."/>
            <person name="Cerutti L."/>
            <person name="Lowe T."/>
            <person name="McCombie W.R."/>
            <person name="Paulsen I."/>
            <person name="Potashkin J."/>
            <person name="Shpakovski G.V."/>
            <person name="Ussery D."/>
            <person name="Barrell B.G."/>
            <person name="Nurse P."/>
        </authorList>
    </citation>
    <scope>NUCLEOTIDE SEQUENCE [LARGE SCALE GENOMIC DNA]</scope>
    <source>
        <strain>972 / ATCC 24843</strain>
    </source>
</reference>
<keyword id="KW-0333">Golgi apparatus</keyword>
<keyword id="KW-0472">Membrane</keyword>
<keyword id="KW-0653">Protein transport</keyword>
<keyword id="KW-1185">Reference proteome</keyword>
<keyword id="KW-0812">Transmembrane</keyword>
<keyword id="KW-1133">Transmembrane helix</keyword>
<keyword id="KW-0813">Transport</keyword>
<sequence>MKSMLLRDSVKKASQFQRSLHSDPNQAKILLEERRKLLEEANSSADENDSHSMATIKSHFERLKRDEQLLNGVLKKYDAKQEVLSPEELRDAQNFLEMQEANSLDNSIRGTNELLERAYATREDFDYQNSVLGNVTNRINGAAMSIPFINQILRKTSIRRRRDSIILALLISVLMLLFLFFH</sequence>
<name>GOS1_SCHPO</name>
<proteinExistence type="inferred from homology"/>
<evidence type="ECO:0000250" key="1"/>
<evidence type="ECO:0000255" key="2"/>
<evidence type="ECO:0000305" key="3"/>
<organism>
    <name type="scientific">Schizosaccharomyces pombe (strain 972 / ATCC 24843)</name>
    <name type="common">Fission yeast</name>
    <dbReference type="NCBI Taxonomy" id="284812"/>
    <lineage>
        <taxon>Eukaryota</taxon>
        <taxon>Fungi</taxon>
        <taxon>Dikarya</taxon>
        <taxon>Ascomycota</taxon>
        <taxon>Taphrinomycotina</taxon>
        <taxon>Schizosaccharomycetes</taxon>
        <taxon>Schizosaccharomycetales</taxon>
        <taxon>Schizosaccharomycetaceae</taxon>
        <taxon>Schizosaccharomyces</taxon>
    </lineage>
</organism>
<gene>
    <name type="primary">gos1</name>
    <name type="ORF">SPAC4G8.10</name>
</gene>
<accession>Q09835</accession>
<dbReference type="EMBL" id="CU329670">
    <property type="protein sequence ID" value="CAA91211.1"/>
    <property type="molecule type" value="Genomic_DNA"/>
</dbReference>
<dbReference type="PIR" id="T38855">
    <property type="entry name" value="S62487"/>
</dbReference>
<dbReference type="RefSeq" id="NP_593070.1">
    <property type="nucleotide sequence ID" value="NM_001018468.2"/>
</dbReference>
<dbReference type="SMR" id="Q09835"/>
<dbReference type="BioGRID" id="279409">
    <property type="interactions" value="53"/>
</dbReference>
<dbReference type="FunCoup" id="Q09835">
    <property type="interactions" value="463"/>
</dbReference>
<dbReference type="IntAct" id="Q09835">
    <property type="interactions" value="1"/>
</dbReference>
<dbReference type="STRING" id="284812.Q09835"/>
<dbReference type="iPTMnet" id="Q09835"/>
<dbReference type="PaxDb" id="4896-SPAC4G8.10.1"/>
<dbReference type="EnsemblFungi" id="SPAC4G8.10.1">
    <property type="protein sequence ID" value="SPAC4G8.10.1:pep"/>
    <property type="gene ID" value="SPAC4G8.10"/>
</dbReference>
<dbReference type="GeneID" id="2542969"/>
<dbReference type="KEGG" id="spo:2542969"/>
<dbReference type="PomBase" id="SPAC4G8.10">
    <property type="gene designation" value="gos1"/>
</dbReference>
<dbReference type="VEuPathDB" id="FungiDB:SPAC4G8.10"/>
<dbReference type="eggNOG" id="KOG3208">
    <property type="taxonomic scope" value="Eukaryota"/>
</dbReference>
<dbReference type="HOGENOM" id="CLU_1482816_0_0_1"/>
<dbReference type="InParanoid" id="Q09835"/>
<dbReference type="OMA" id="ERAYYTR"/>
<dbReference type="PhylomeDB" id="Q09835"/>
<dbReference type="Reactome" id="R-SPO-6807878">
    <property type="pathway name" value="COPI-mediated anterograde transport"/>
</dbReference>
<dbReference type="Reactome" id="R-SPO-6811438">
    <property type="pathway name" value="Intra-Golgi traffic"/>
</dbReference>
<dbReference type="PRO" id="PR:Q09835"/>
<dbReference type="Proteomes" id="UP000002485">
    <property type="component" value="Chromosome I"/>
</dbReference>
<dbReference type="GO" id="GO:0005801">
    <property type="term" value="C:cis-Golgi network"/>
    <property type="evidence" value="ECO:0007669"/>
    <property type="project" value="InterPro"/>
</dbReference>
<dbReference type="GO" id="GO:0005794">
    <property type="term" value="C:Golgi apparatus"/>
    <property type="evidence" value="ECO:0007005"/>
    <property type="project" value="PomBase"/>
</dbReference>
<dbReference type="GO" id="GO:0005797">
    <property type="term" value="C:Golgi medial cisterna"/>
    <property type="evidence" value="ECO:0000318"/>
    <property type="project" value="GO_Central"/>
</dbReference>
<dbReference type="GO" id="GO:0000139">
    <property type="term" value="C:Golgi membrane"/>
    <property type="evidence" value="ECO:0000318"/>
    <property type="project" value="GO_Central"/>
</dbReference>
<dbReference type="GO" id="GO:0031201">
    <property type="term" value="C:SNARE complex"/>
    <property type="evidence" value="ECO:0000318"/>
    <property type="project" value="GO_Central"/>
</dbReference>
<dbReference type="GO" id="GO:0005484">
    <property type="term" value="F:SNAP receptor activity"/>
    <property type="evidence" value="ECO:0000318"/>
    <property type="project" value="GO_Central"/>
</dbReference>
<dbReference type="GO" id="GO:0006888">
    <property type="term" value="P:endoplasmic reticulum to Golgi vesicle-mediated transport"/>
    <property type="evidence" value="ECO:0000318"/>
    <property type="project" value="GO_Central"/>
</dbReference>
<dbReference type="GO" id="GO:0048219">
    <property type="term" value="P:inter-Golgi cisterna vesicle-mediated transport"/>
    <property type="evidence" value="ECO:0000318"/>
    <property type="project" value="GO_Central"/>
</dbReference>
<dbReference type="GO" id="GO:0006886">
    <property type="term" value="P:intracellular protein transport"/>
    <property type="evidence" value="ECO:0000303"/>
    <property type="project" value="PomBase"/>
</dbReference>
<dbReference type="GO" id="GO:0006906">
    <property type="term" value="P:vesicle fusion"/>
    <property type="evidence" value="ECO:0000318"/>
    <property type="project" value="GO_Central"/>
</dbReference>
<dbReference type="InterPro" id="IPR023601">
    <property type="entry name" value="Golgi_SNAP_su1"/>
</dbReference>
<dbReference type="PANTHER" id="PTHR21094:SF2">
    <property type="entry name" value="GOLGI SNAP RECEPTOR COMPLEX MEMBER 1"/>
    <property type="match status" value="1"/>
</dbReference>
<dbReference type="PANTHER" id="PTHR21094">
    <property type="entry name" value="GOS-28 SNARE- RELATED"/>
    <property type="match status" value="1"/>
</dbReference>
<dbReference type="Pfam" id="PF12352">
    <property type="entry name" value="V-SNARE_C"/>
    <property type="match status" value="1"/>
</dbReference>
<feature type="chain" id="PRO_0000212556" description="Protein transport protein gos1">
    <location>
        <begin position="1"/>
        <end position="182"/>
    </location>
</feature>
<feature type="topological domain" description="Cytoplasmic" evidence="2">
    <location>
        <begin position="1"/>
        <end position="163"/>
    </location>
</feature>
<feature type="transmembrane region" description="Helical; Anchor for type IV membrane protein" evidence="2">
    <location>
        <begin position="164"/>
        <end position="181"/>
    </location>
</feature>
<feature type="topological domain" description="Vesicular" evidence="2">
    <location>
        <position position="182"/>
    </location>
</feature>